<evidence type="ECO:0000255" key="1">
    <source>
        <dbReference type="HAMAP-Rule" id="MF_00111"/>
    </source>
</evidence>
<name>MURA_SALEP</name>
<reference key="1">
    <citation type="journal article" date="2008" name="Genome Res.">
        <title>Comparative genome analysis of Salmonella enteritidis PT4 and Salmonella gallinarum 287/91 provides insights into evolutionary and host adaptation pathways.</title>
        <authorList>
            <person name="Thomson N.R."/>
            <person name="Clayton D.J."/>
            <person name="Windhorst D."/>
            <person name="Vernikos G."/>
            <person name="Davidson S."/>
            <person name="Churcher C."/>
            <person name="Quail M.A."/>
            <person name="Stevens M."/>
            <person name="Jones M.A."/>
            <person name="Watson M."/>
            <person name="Barron A."/>
            <person name="Layton A."/>
            <person name="Pickard D."/>
            <person name="Kingsley R.A."/>
            <person name="Bignell A."/>
            <person name="Clark L."/>
            <person name="Harris B."/>
            <person name="Ormond D."/>
            <person name="Abdellah Z."/>
            <person name="Brooks K."/>
            <person name="Cherevach I."/>
            <person name="Chillingworth T."/>
            <person name="Woodward J."/>
            <person name="Norberczak H."/>
            <person name="Lord A."/>
            <person name="Arrowsmith C."/>
            <person name="Jagels K."/>
            <person name="Moule S."/>
            <person name="Mungall K."/>
            <person name="Saunders M."/>
            <person name="Whitehead S."/>
            <person name="Chabalgoity J.A."/>
            <person name="Maskell D."/>
            <person name="Humphreys T."/>
            <person name="Roberts M."/>
            <person name="Barrow P.A."/>
            <person name="Dougan G."/>
            <person name="Parkhill J."/>
        </authorList>
    </citation>
    <scope>NUCLEOTIDE SEQUENCE [LARGE SCALE GENOMIC DNA]</scope>
    <source>
        <strain>P125109</strain>
    </source>
</reference>
<proteinExistence type="inferred from homology"/>
<keyword id="KW-0131">Cell cycle</keyword>
<keyword id="KW-0132">Cell division</keyword>
<keyword id="KW-0133">Cell shape</keyword>
<keyword id="KW-0961">Cell wall biogenesis/degradation</keyword>
<keyword id="KW-0963">Cytoplasm</keyword>
<keyword id="KW-0573">Peptidoglycan synthesis</keyword>
<keyword id="KW-0670">Pyruvate</keyword>
<keyword id="KW-0808">Transferase</keyword>
<protein>
    <recommendedName>
        <fullName evidence="1">UDP-N-acetylglucosamine 1-carboxyvinyltransferase</fullName>
        <ecNumber evidence="1">2.5.1.7</ecNumber>
    </recommendedName>
    <alternativeName>
        <fullName evidence="1">Enoylpyruvate transferase</fullName>
    </alternativeName>
    <alternativeName>
        <fullName evidence="1">UDP-N-acetylglucosamine enolpyruvyl transferase</fullName>
        <shortName evidence="1">EPT</shortName>
    </alternativeName>
</protein>
<comment type="function">
    <text evidence="1">Cell wall formation. Adds enolpyruvyl to UDP-N-acetylglucosamine.</text>
</comment>
<comment type="catalytic activity">
    <reaction evidence="1">
        <text>phosphoenolpyruvate + UDP-N-acetyl-alpha-D-glucosamine = UDP-N-acetyl-3-O-(1-carboxyvinyl)-alpha-D-glucosamine + phosphate</text>
        <dbReference type="Rhea" id="RHEA:18681"/>
        <dbReference type="ChEBI" id="CHEBI:43474"/>
        <dbReference type="ChEBI" id="CHEBI:57705"/>
        <dbReference type="ChEBI" id="CHEBI:58702"/>
        <dbReference type="ChEBI" id="CHEBI:68483"/>
        <dbReference type="EC" id="2.5.1.7"/>
    </reaction>
</comment>
<comment type="pathway">
    <text evidence="1">Cell wall biogenesis; peptidoglycan biosynthesis.</text>
</comment>
<comment type="subcellular location">
    <subcellularLocation>
        <location evidence="1">Cytoplasm</location>
    </subcellularLocation>
</comment>
<comment type="similarity">
    <text evidence="1">Belongs to the EPSP synthase family. MurA subfamily.</text>
</comment>
<organism>
    <name type="scientific">Salmonella enteritidis PT4 (strain P125109)</name>
    <dbReference type="NCBI Taxonomy" id="550537"/>
    <lineage>
        <taxon>Bacteria</taxon>
        <taxon>Pseudomonadati</taxon>
        <taxon>Pseudomonadota</taxon>
        <taxon>Gammaproteobacteria</taxon>
        <taxon>Enterobacterales</taxon>
        <taxon>Enterobacteriaceae</taxon>
        <taxon>Salmonella</taxon>
    </lineage>
</organism>
<dbReference type="EC" id="2.5.1.7" evidence="1"/>
<dbReference type="EMBL" id="AM933172">
    <property type="protein sequence ID" value="CAR34716.1"/>
    <property type="molecule type" value="Genomic_DNA"/>
</dbReference>
<dbReference type="RefSeq" id="WP_000357287.1">
    <property type="nucleotide sequence ID" value="NC_011294.1"/>
</dbReference>
<dbReference type="SMR" id="B5R0I0"/>
<dbReference type="KEGG" id="set:SEN3140"/>
<dbReference type="HOGENOM" id="CLU_027387_0_0_6"/>
<dbReference type="UniPathway" id="UPA00219"/>
<dbReference type="Proteomes" id="UP000000613">
    <property type="component" value="Chromosome"/>
</dbReference>
<dbReference type="GO" id="GO:0005737">
    <property type="term" value="C:cytoplasm"/>
    <property type="evidence" value="ECO:0007669"/>
    <property type="project" value="UniProtKB-SubCell"/>
</dbReference>
<dbReference type="GO" id="GO:0008760">
    <property type="term" value="F:UDP-N-acetylglucosamine 1-carboxyvinyltransferase activity"/>
    <property type="evidence" value="ECO:0007669"/>
    <property type="project" value="UniProtKB-UniRule"/>
</dbReference>
<dbReference type="GO" id="GO:0051301">
    <property type="term" value="P:cell division"/>
    <property type="evidence" value="ECO:0007669"/>
    <property type="project" value="UniProtKB-KW"/>
</dbReference>
<dbReference type="GO" id="GO:0071555">
    <property type="term" value="P:cell wall organization"/>
    <property type="evidence" value="ECO:0007669"/>
    <property type="project" value="UniProtKB-KW"/>
</dbReference>
<dbReference type="GO" id="GO:0009252">
    <property type="term" value="P:peptidoglycan biosynthetic process"/>
    <property type="evidence" value="ECO:0007669"/>
    <property type="project" value="UniProtKB-UniRule"/>
</dbReference>
<dbReference type="GO" id="GO:0008360">
    <property type="term" value="P:regulation of cell shape"/>
    <property type="evidence" value="ECO:0007669"/>
    <property type="project" value="UniProtKB-KW"/>
</dbReference>
<dbReference type="GO" id="GO:0019277">
    <property type="term" value="P:UDP-N-acetylgalactosamine biosynthetic process"/>
    <property type="evidence" value="ECO:0007669"/>
    <property type="project" value="InterPro"/>
</dbReference>
<dbReference type="CDD" id="cd01555">
    <property type="entry name" value="UdpNAET"/>
    <property type="match status" value="1"/>
</dbReference>
<dbReference type="FunFam" id="3.65.10.10:FF:000002">
    <property type="entry name" value="UDP-N-acetylglucosamine 1-carboxyvinyltransferase"/>
    <property type="match status" value="1"/>
</dbReference>
<dbReference type="Gene3D" id="3.65.10.10">
    <property type="entry name" value="Enolpyruvate transferase domain"/>
    <property type="match status" value="2"/>
</dbReference>
<dbReference type="HAMAP" id="MF_00111">
    <property type="entry name" value="MurA"/>
    <property type="match status" value="1"/>
</dbReference>
<dbReference type="InterPro" id="IPR001986">
    <property type="entry name" value="Enolpyruvate_Tfrase_dom"/>
</dbReference>
<dbReference type="InterPro" id="IPR036968">
    <property type="entry name" value="Enolpyruvate_Tfrase_sf"/>
</dbReference>
<dbReference type="InterPro" id="IPR050068">
    <property type="entry name" value="MurA_subfamily"/>
</dbReference>
<dbReference type="InterPro" id="IPR013792">
    <property type="entry name" value="RNA3'P_cycl/enolpyr_Trfase_a/b"/>
</dbReference>
<dbReference type="InterPro" id="IPR005750">
    <property type="entry name" value="UDP_GlcNAc_COvinyl_MurA"/>
</dbReference>
<dbReference type="NCBIfam" id="TIGR01072">
    <property type="entry name" value="murA"/>
    <property type="match status" value="1"/>
</dbReference>
<dbReference type="NCBIfam" id="NF006873">
    <property type="entry name" value="PRK09369.1"/>
    <property type="match status" value="1"/>
</dbReference>
<dbReference type="PANTHER" id="PTHR43783">
    <property type="entry name" value="UDP-N-ACETYLGLUCOSAMINE 1-CARBOXYVINYLTRANSFERASE"/>
    <property type="match status" value="1"/>
</dbReference>
<dbReference type="PANTHER" id="PTHR43783:SF1">
    <property type="entry name" value="UDP-N-ACETYLGLUCOSAMINE 1-CARBOXYVINYLTRANSFERASE"/>
    <property type="match status" value="1"/>
</dbReference>
<dbReference type="Pfam" id="PF00275">
    <property type="entry name" value="EPSP_synthase"/>
    <property type="match status" value="1"/>
</dbReference>
<dbReference type="SUPFAM" id="SSF55205">
    <property type="entry name" value="EPT/RTPC-like"/>
    <property type="match status" value="1"/>
</dbReference>
<feature type="chain" id="PRO_1000094718" description="UDP-N-acetylglucosamine 1-carboxyvinyltransferase">
    <location>
        <begin position="1"/>
        <end position="419"/>
    </location>
</feature>
<feature type="active site" description="Proton donor" evidence="1">
    <location>
        <position position="115"/>
    </location>
</feature>
<feature type="binding site" evidence="1">
    <location>
        <begin position="22"/>
        <end position="23"/>
    </location>
    <ligand>
        <name>phosphoenolpyruvate</name>
        <dbReference type="ChEBI" id="CHEBI:58702"/>
    </ligand>
</feature>
<feature type="binding site" evidence="1">
    <location>
        <position position="91"/>
    </location>
    <ligand>
        <name>UDP-N-acetyl-alpha-D-glucosamine</name>
        <dbReference type="ChEBI" id="CHEBI:57705"/>
    </ligand>
</feature>
<feature type="binding site" evidence="1">
    <location>
        <begin position="120"/>
        <end position="124"/>
    </location>
    <ligand>
        <name>UDP-N-acetyl-alpha-D-glucosamine</name>
        <dbReference type="ChEBI" id="CHEBI:57705"/>
    </ligand>
</feature>
<feature type="binding site" evidence="1">
    <location>
        <begin position="160"/>
        <end position="163"/>
    </location>
    <ligand>
        <name>UDP-N-acetyl-alpha-D-glucosamine</name>
        <dbReference type="ChEBI" id="CHEBI:57705"/>
    </ligand>
</feature>
<feature type="binding site" evidence="1">
    <location>
        <position position="305"/>
    </location>
    <ligand>
        <name>UDP-N-acetyl-alpha-D-glucosamine</name>
        <dbReference type="ChEBI" id="CHEBI:57705"/>
    </ligand>
</feature>
<feature type="binding site" evidence="1">
    <location>
        <position position="327"/>
    </location>
    <ligand>
        <name>UDP-N-acetyl-alpha-D-glucosamine</name>
        <dbReference type="ChEBI" id="CHEBI:57705"/>
    </ligand>
</feature>
<feature type="modified residue" description="2-(S-cysteinyl)pyruvic acid O-phosphothioketal" evidence="1">
    <location>
        <position position="115"/>
    </location>
</feature>
<gene>
    <name evidence="1" type="primary">murA</name>
    <name type="ordered locus">SEN3140</name>
</gene>
<sequence length="419" mass="44755">MDKFRVQGPTTLQGEVTISGAKNAALPILFAALLAEEPVEIQNVPKLKDVDTSMKLLSQLGAKVERNGSVHIDASQVNVFCAPYDLVKTMRASIWALGPLVARFGQGQVSLPGGCTIGARPVDLHITGLEQLGATIKLEEGYVKASVEGRLKGAHIVMDKVSVGATVTIMCAATLAEGTTIIENAAREPEIVDTANFLVTLGAKIAGQGTDRITIEGVERLGGGVYRVLPDRIETGTFLVAAAISRGKILCRNAQPDTLDAVLAKLRDAGADIEVGEDWISLDMHGKRPKAVNVRTAPHPAFPTDMQAQFTLLNLVAEGTGFITETVFENRFMHVPELSRMGARAEIESNTVICHGIETLSGAQVMATDLRASASLVLAGCIAEGTTIVDRIYHIDRGYERIEDKLRALGANIERVKGE</sequence>
<accession>B5R0I0</accession>